<keyword id="KW-0002">3D-structure</keyword>
<keyword id="KW-0049">Antioxidant</keyword>
<keyword id="KW-0963">Cytoplasm</keyword>
<keyword id="KW-1015">Disulfide bond</keyword>
<keyword id="KW-1017">Isopeptide bond</keyword>
<keyword id="KW-0479">Metal-binding</keyword>
<keyword id="KW-0560">Oxidoreductase</keyword>
<keyword id="KW-0575">Peroxidase</keyword>
<keyword id="KW-0676">Redox-active center</keyword>
<keyword id="KW-1185">Reference proteome</keyword>
<keyword id="KW-0832">Ubl conjugation</keyword>
<keyword id="KW-0862">Zinc</keyword>
<comment type="function">
    <text evidence="1">Thiol-specific peroxidase that catalyzes the reduction of hydrogen peroxide and organic hydroperoxides to water and alcohols, respectively. Plays a role in cell protection against oxidative stress by detoxifying peroxides and as sensor of hydrogen peroxide-mediated signaling events. Preferentially eliminates organic peroxides rather than hydrogen peroxide. Relays alkyl hydroperoxides as a signal to the transcription factor CAD1/YAP2 by inducing the formation of intramolecular disulfide bonds in CAD1, which causes its nuclear accumulation and activation. Involved in cellular Mn(2+) homeostasis.</text>
</comment>
<comment type="catalytic activity">
    <reaction evidence="1">
        <text>a hydroperoxide + [thioredoxin]-dithiol = an alcohol + [thioredoxin]-disulfide + H2O</text>
        <dbReference type="Rhea" id="RHEA:62620"/>
        <dbReference type="Rhea" id="RHEA-COMP:10698"/>
        <dbReference type="Rhea" id="RHEA-COMP:10700"/>
        <dbReference type="ChEBI" id="CHEBI:15377"/>
        <dbReference type="ChEBI" id="CHEBI:29950"/>
        <dbReference type="ChEBI" id="CHEBI:30879"/>
        <dbReference type="ChEBI" id="CHEBI:35924"/>
        <dbReference type="ChEBI" id="CHEBI:50058"/>
        <dbReference type="EC" id="1.11.1.24"/>
    </reaction>
</comment>
<comment type="subunit">
    <text evidence="3">Homodimer; disulfide-linked, upon oxidation.</text>
</comment>
<comment type="subcellular location">
    <subcellularLocation>
        <location evidence="1">Cytoplasm</location>
    </subcellularLocation>
</comment>
<comment type="PTM">
    <text evidence="3">Conjugated to URM1, a ubiquitin-like protein, in response to oxidative stresses. The attachment of URM1 to lysine residues exclusively depends on the presence of a peroxidatic cysteine in the target protein, with low specificity for the particular residue, motif, or structural context at which urmylation can occur. The URM1-conjugation reaction is mechanistically and directly coupled to the process of cysteine persulfidation, transfering the sulfur atom of the URM1 thiocarboxyl group to redox-active cysteine residues in the target protein if it is exposed to oxidative conditions.</text>
</comment>
<comment type="PTM">
    <text evidence="5">Persulfidated on specific redox-active cysteine residues. Persulfidation (also called protein S-sulfhydration) may provide a molecular mechanism that enables cells to protect vulnerable cysteine residues from reactive oxygen species (ROS) under stress conditions.</text>
</comment>
<comment type="miscellaneous">
    <text evidence="1">The active site is a conserved redox-active cysteine residue, the peroxidatic cysteine (C(P)), which makes the nucleophilic attack on the peroxide substrate. The peroxide oxidizes the C(P)-SH to cysteine sulfenic acid (C(P)-SOH), which then reacts with another cysteine residue, the resolving cysteine (C(R)), to form a disulfide bridge. The disulfide is subsequently reduced by an appropriate electron donor to complete the catalytic cycle. In this typical 2-Cys Prx, C(R) is provided by the other dimeric subunit to form an intersubunit disulfide. The disulfide is subsequently reduced by thioredoxin.</text>
</comment>
<comment type="similarity">
    <text evidence="4">Belongs to the peroxiredoxin family. Prx5 subfamily.</text>
</comment>
<organism>
    <name type="scientific">Chaetomium thermophilum (strain DSM 1495 / CBS 144.50 / IMI 039719)</name>
    <name type="common">Thermochaetoides thermophila</name>
    <dbReference type="NCBI Taxonomy" id="759272"/>
    <lineage>
        <taxon>Eukaryota</taxon>
        <taxon>Fungi</taxon>
        <taxon>Dikarya</taxon>
        <taxon>Ascomycota</taxon>
        <taxon>Pezizomycotina</taxon>
        <taxon>Sordariomycetes</taxon>
        <taxon>Sordariomycetidae</taxon>
        <taxon>Sordariales</taxon>
        <taxon>Chaetomiaceae</taxon>
        <taxon>Thermochaetoides</taxon>
    </lineage>
</organism>
<evidence type="ECO:0000250" key="1">
    <source>
        <dbReference type="UniProtKB" id="P38013"/>
    </source>
</evidence>
<evidence type="ECO:0000255" key="2">
    <source>
        <dbReference type="PROSITE-ProRule" id="PRU00691"/>
    </source>
</evidence>
<evidence type="ECO:0000269" key="3">
    <source>
    </source>
</evidence>
<evidence type="ECO:0000305" key="4"/>
<evidence type="ECO:0000305" key="5">
    <source>
    </source>
</evidence>
<evidence type="ECO:0007744" key="6">
    <source>
        <dbReference type="PDB" id="7Q5N"/>
    </source>
</evidence>
<evidence type="ECO:0007744" key="7">
    <source>
        <dbReference type="PDB" id="7Q68"/>
    </source>
</evidence>
<evidence type="ECO:0007744" key="8">
    <source>
        <dbReference type="PDB" id="7Q69"/>
    </source>
</evidence>
<evidence type="ECO:0007744" key="9">
    <source>
        <dbReference type="PDB" id="7Q6A"/>
    </source>
</evidence>
<evidence type="ECO:0007829" key="10">
    <source>
        <dbReference type="PDB" id="7Q5N"/>
    </source>
</evidence>
<evidence type="ECO:0007829" key="11">
    <source>
        <dbReference type="PDB" id="7Q6A"/>
    </source>
</evidence>
<accession>G0S1P8</accession>
<feature type="chain" id="PRO_0000461632" description="Peroxiredoxin AHP1">
    <location>
        <begin position="1"/>
        <end position="172"/>
    </location>
</feature>
<feature type="domain" description="Thioredoxin" evidence="2">
    <location>
        <begin position="4"/>
        <end position="171"/>
    </location>
</feature>
<feature type="active site" description="Cysteine sulfenic acid (-SOH) intermediate" evidence="1">
    <location>
        <position position="60"/>
    </location>
</feature>
<feature type="modified residue" description="Cysteine persulfide" evidence="3">
    <location>
        <position position="60"/>
    </location>
</feature>
<feature type="disulfide bond" description="Interchain (with C-60); in linked form" evidence="3 7">
    <location>
        <position position="30"/>
    </location>
</feature>
<feature type="disulfide bond" description="Interchain (with C-30); in linked form" evidence="3 7">
    <location>
        <position position="60"/>
    </location>
</feature>
<feature type="cross-link" description="Glycyl lysine isopeptide (Lys-Gly) (interchain with G-Cter in URM1)" evidence="3">
    <location>
        <position position="44"/>
    </location>
</feature>
<feature type="cross-link" description="Glycyl lysine isopeptide (Lys-Gly) (interchain with G-Cter in URM1)" evidence="3">
    <location>
        <position position="63"/>
    </location>
</feature>
<feature type="cross-link" description="Glycyl lysine isopeptide (Lys-Gly) (interchain with G-Cter in URM1)" evidence="3">
    <location>
        <position position="99"/>
    </location>
</feature>
<feature type="cross-link" description="Glycyl lysine isopeptide (Lys-Gly) (interchain with G-Cter in URM1)" evidence="3">
    <location>
        <position position="141"/>
    </location>
</feature>
<feature type="cross-link" description="Glycyl lysine isopeptide (Lys-Gly) (interchain with G-Cter in URM1)" evidence="3">
    <location>
        <position position="156"/>
    </location>
</feature>
<feature type="cross-link" description="Glycyl lysine isopeptide (Lys-Gly) (interchain with G-Cter in URM1)" evidence="3">
    <location>
        <position position="171"/>
    </location>
</feature>
<feature type="strand" evidence="11">
    <location>
        <begin position="15"/>
        <end position="18"/>
    </location>
</feature>
<feature type="strand" evidence="10">
    <location>
        <begin position="27"/>
        <end position="29"/>
    </location>
</feature>
<feature type="strand" evidence="11">
    <location>
        <begin position="34"/>
        <end position="37"/>
    </location>
</feature>
<feature type="helix" evidence="11">
    <location>
        <begin position="38"/>
        <end position="42"/>
    </location>
</feature>
<feature type="strand" evidence="11">
    <location>
        <begin position="44"/>
        <end position="51"/>
    </location>
</feature>
<feature type="helix" evidence="11">
    <location>
        <begin position="58"/>
        <end position="62"/>
    </location>
</feature>
<feature type="helix" evidence="11">
    <location>
        <begin position="64"/>
        <end position="70"/>
    </location>
</feature>
<feature type="helix" evidence="11">
    <location>
        <begin position="72"/>
        <end position="77"/>
    </location>
</feature>
<feature type="strand" evidence="11">
    <location>
        <begin position="82"/>
        <end position="89"/>
    </location>
</feature>
<feature type="helix" evidence="11">
    <location>
        <begin position="91"/>
        <end position="100"/>
    </location>
</feature>
<feature type="strand" evidence="11">
    <location>
        <begin position="105"/>
        <end position="112"/>
    </location>
</feature>
<feature type="helix" evidence="11">
    <location>
        <begin position="114"/>
        <end position="116"/>
    </location>
</feature>
<feature type="helix" evidence="11">
    <location>
        <begin position="117"/>
        <end position="121"/>
    </location>
</feature>
<feature type="strand" evidence="11">
    <location>
        <begin position="132"/>
        <end position="138"/>
    </location>
</feature>
<feature type="strand" evidence="11">
    <location>
        <begin position="141"/>
        <end position="148"/>
    </location>
</feature>
<feature type="turn" evidence="11">
    <location>
        <begin position="155"/>
        <end position="157"/>
    </location>
</feature>
<feature type="helix" evidence="11">
    <location>
        <begin position="159"/>
        <end position="167"/>
    </location>
</feature>
<protein>
    <recommendedName>
        <fullName evidence="4">Peroxiredoxin AHP1</fullName>
        <shortName>Prx</shortName>
        <ecNumber evidence="1">1.11.1.24</ecNumber>
    </recommendedName>
    <alternativeName>
        <fullName>Alkyl hydroperoxide reductase</fullName>
    </alternativeName>
</protein>
<sequence>MAPLQPGDSFPANVVFSYIPPTGSLDLTVCGRPIEYNASEALAKGTSVLVAVPGAFTPTCQEKHVTGFIAKLDQLRQAGVDRVLFIASNDAFVMSAWGKANGIKDESILFLSDSDTAFSSSIGWANAGRTGRYAIVVKDGKVVYAAVDTVRGSTEKSGVDAVLTVLGNQGKL</sequence>
<reference key="1">
    <citation type="journal article" date="2011" name="Cell">
        <title>Insight into structure and assembly of the nuclear pore complex by utilizing the genome of a eukaryotic thermophile.</title>
        <authorList>
            <person name="Amlacher S."/>
            <person name="Sarges P."/>
            <person name="Flemming D."/>
            <person name="van Noort V."/>
            <person name="Kunze R."/>
            <person name="Devos D.P."/>
            <person name="Arumugam M."/>
            <person name="Bork P."/>
            <person name="Hurt E."/>
        </authorList>
    </citation>
    <scope>NUCLEOTIDE SEQUENCE [LARGE SCALE GENOMIC DNA]</scope>
    <source>
        <strain>DSM 1495 / CBS 144.50 / IMI 039719</strain>
    </source>
</reference>
<reference evidence="6 7 8 9" key="2">
    <citation type="journal article" date="2022" name="EMBO J.">
        <title>E2/E3-independent ubiquitin-like protein conjugation by Urm1 is directly coupled to cysteine persulfidation.</title>
        <authorList>
            <person name="Ravichandran K.E."/>
            <person name="Kaduhr L."/>
            <person name="Skupien-Rabian B."/>
            <person name="Shvetsova E."/>
            <person name="Sokolowski M."/>
            <person name="Krutyholowa R."/>
            <person name="Kwasna D."/>
            <person name="Brachmann C."/>
            <person name="Lin S."/>
            <person name="Guzman Perez S."/>
            <person name="Wilk P."/>
            <person name="Koesters M."/>
            <person name="Grudnik P."/>
            <person name="Jankowska U."/>
            <person name="Leidel S.A."/>
            <person name="Schaffrath R."/>
            <person name="Glatt S."/>
        </authorList>
    </citation>
    <scope>X-RAY CRYSTALLOGRAPHY (1.10 ANGSTROMS) IN COMPLEX WITH URM1</scope>
    <scope>SUBUNIT</scope>
    <scope>DISULFIDE BONDS</scope>
    <scope>URMYLATION AT LYS-44; LYS-63; LYS-99; LYS-141; LYS-156 AND LYS-171</scope>
    <scope>SULFHYDRATION AT CYS-60</scope>
</reference>
<name>AHP1_CHATD</name>
<gene>
    <name type="primary">AHP1</name>
    <name type="ORF">CTHT_0014370</name>
</gene>
<dbReference type="EC" id="1.11.1.24" evidence="1"/>
<dbReference type="EMBL" id="GL988039">
    <property type="protein sequence ID" value="EGS22958.1"/>
    <property type="molecule type" value="Genomic_DNA"/>
</dbReference>
<dbReference type="RefSeq" id="XP_006691950.1">
    <property type="nucleotide sequence ID" value="XM_006691887.1"/>
</dbReference>
<dbReference type="PDB" id="7Q5N">
    <property type="method" value="X-ray"/>
    <property type="resolution" value="2.50 A"/>
    <property type="chains" value="A/B/C/D/E/F=1-172"/>
</dbReference>
<dbReference type="PDB" id="7Q68">
    <property type="method" value="X-ray"/>
    <property type="resolution" value="1.75 A"/>
    <property type="chains" value="A=1-172"/>
</dbReference>
<dbReference type="PDB" id="7Q69">
    <property type="method" value="X-ray"/>
    <property type="resolution" value="1.85 A"/>
    <property type="chains" value="A/B/C/D=1-172"/>
</dbReference>
<dbReference type="PDB" id="7Q6A">
    <property type="method" value="X-ray"/>
    <property type="resolution" value="1.10 A"/>
    <property type="chains" value="A/B=1-172"/>
</dbReference>
<dbReference type="PDBsum" id="7Q5N"/>
<dbReference type="PDBsum" id="7Q68"/>
<dbReference type="PDBsum" id="7Q69"/>
<dbReference type="PDBsum" id="7Q6A"/>
<dbReference type="SMR" id="G0S1P8"/>
<dbReference type="STRING" id="759272.G0S1P8"/>
<dbReference type="GeneID" id="18255475"/>
<dbReference type="KEGG" id="cthr:CTHT_0014370"/>
<dbReference type="eggNOG" id="KOG0541">
    <property type="taxonomic scope" value="Eukaryota"/>
</dbReference>
<dbReference type="HOGENOM" id="CLU_072440_1_1_1"/>
<dbReference type="OMA" id="FIRTKDQ"/>
<dbReference type="OrthoDB" id="195498at2759"/>
<dbReference type="Proteomes" id="UP000008066">
    <property type="component" value="Unassembled WGS sequence"/>
</dbReference>
<dbReference type="GO" id="GO:0005739">
    <property type="term" value="C:mitochondrion"/>
    <property type="evidence" value="ECO:0007669"/>
    <property type="project" value="TreeGrafter"/>
</dbReference>
<dbReference type="GO" id="GO:0005777">
    <property type="term" value="C:peroxisome"/>
    <property type="evidence" value="ECO:0007669"/>
    <property type="project" value="TreeGrafter"/>
</dbReference>
<dbReference type="GO" id="GO:0046872">
    <property type="term" value="F:metal ion binding"/>
    <property type="evidence" value="ECO:0007669"/>
    <property type="project" value="UniProtKB-KW"/>
</dbReference>
<dbReference type="GO" id="GO:0008379">
    <property type="term" value="F:thioredoxin peroxidase activity"/>
    <property type="evidence" value="ECO:0007669"/>
    <property type="project" value="InterPro"/>
</dbReference>
<dbReference type="GO" id="GO:0045454">
    <property type="term" value="P:cell redox homeostasis"/>
    <property type="evidence" value="ECO:0007669"/>
    <property type="project" value="TreeGrafter"/>
</dbReference>
<dbReference type="GO" id="GO:0034599">
    <property type="term" value="P:cellular response to oxidative stress"/>
    <property type="evidence" value="ECO:0007669"/>
    <property type="project" value="InterPro"/>
</dbReference>
<dbReference type="GO" id="GO:0042744">
    <property type="term" value="P:hydrogen peroxide catabolic process"/>
    <property type="evidence" value="ECO:0007669"/>
    <property type="project" value="TreeGrafter"/>
</dbReference>
<dbReference type="CDD" id="cd03013">
    <property type="entry name" value="PRX5_like"/>
    <property type="match status" value="1"/>
</dbReference>
<dbReference type="Gene3D" id="3.40.30.10">
    <property type="entry name" value="Glutaredoxin"/>
    <property type="match status" value="1"/>
</dbReference>
<dbReference type="InterPro" id="IPR037944">
    <property type="entry name" value="PRX5-like"/>
</dbReference>
<dbReference type="InterPro" id="IPR013740">
    <property type="entry name" value="Redoxin"/>
</dbReference>
<dbReference type="InterPro" id="IPR036249">
    <property type="entry name" value="Thioredoxin-like_sf"/>
</dbReference>
<dbReference type="InterPro" id="IPR013766">
    <property type="entry name" value="Thioredoxin_domain"/>
</dbReference>
<dbReference type="PANTHER" id="PTHR10430">
    <property type="entry name" value="PEROXIREDOXIN"/>
    <property type="match status" value="1"/>
</dbReference>
<dbReference type="PANTHER" id="PTHR10430:SF16">
    <property type="entry name" value="PEROXIREDOXIN-5, MITOCHONDRIAL"/>
    <property type="match status" value="1"/>
</dbReference>
<dbReference type="Pfam" id="PF08534">
    <property type="entry name" value="Redoxin"/>
    <property type="match status" value="1"/>
</dbReference>
<dbReference type="SUPFAM" id="SSF52833">
    <property type="entry name" value="Thioredoxin-like"/>
    <property type="match status" value="1"/>
</dbReference>
<dbReference type="PROSITE" id="PS51352">
    <property type="entry name" value="THIOREDOXIN_2"/>
    <property type="match status" value="1"/>
</dbReference>
<proteinExistence type="evidence at protein level"/>